<gene>
    <name evidence="1" type="primary">fabH</name>
    <name type="ordered locus">LCA_0813</name>
</gene>
<accession>Q38XG4</accession>
<dbReference type="EC" id="2.3.1.180" evidence="1"/>
<dbReference type="EMBL" id="CR936503">
    <property type="protein sequence ID" value="CAI55117.1"/>
    <property type="molecule type" value="Genomic_DNA"/>
</dbReference>
<dbReference type="RefSeq" id="WP_011374519.1">
    <property type="nucleotide sequence ID" value="NC_007576.1"/>
</dbReference>
<dbReference type="SMR" id="Q38XG4"/>
<dbReference type="STRING" id="314315.LCA_0813"/>
<dbReference type="GeneID" id="57133674"/>
<dbReference type="KEGG" id="lsa:LCA_0813"/>
<dbReference type="eggNOG" id="COG0332">
    <property type="taxonomic scope" value="Bacteria"/>
</dbReference>
<dbReference type="HOGENOM" id="CLU_039592_4_1_9"/>
<dbReference type="OrthoDB" id="9815506at2"/>
<dbReference type="UniPathway" id="UPA00094"/>
<dbReference type="Proteomes" id="UP000002707">
    <property type="component" value="Chromosome"/>
</dbReference>
<dbReference type="GO" id="GO:0005737">
    <property type="term" value="C:cytoplasm"/>
    <property type="evidence" value="ECO:0007669"/>
    <property type="project" value="UniProtKB-SubCell"/>
</dbReference>
<dbReference type="GO" id="GO:0004315">
    <property type="term" value="F:3-oxoacyl-[acyl-carrier-protein] synthase activity"/>
    <property type="evidence" value="ECO:0007669"/>
    <property type="project" value="InterPro"/>
</dbReference>
<dbReference type="GO" id="GO:0033818">
    <property type="term" value="F:beta-ketoacyl-acyl-carrier-protein synthase III activity"/>
    <property type="evidence" value="ECO:0007669"/>
    <property type="project" value="UniProtKB-UniRule"/>
</dbReference>
<dbReference type="GO" id="GO:0006633">
    <property type="term" value="P:fatty acid biosynthetic process"/>
    <property type="evidence" value="ECO:0007669"/>
    <property type="project" value="UniProtKB-UniRule"/>
</dbReference>
<dbReference type="CDD" id="cd00830">
    <property type="entry name" value="KAS_III"/>
    <property type="match status" value="1"/>
</dbReference>
<dbReference type="Gene3D" id="3.40.47.10">
    <property type="match status" value="1"/>
</dbReference>
<dbReference type="HAMAP" id="MF_01815">
    <property type="entry name" value="FabH"/>
    <property type="match status" value="1"/>
</dbReference>
<dbReference type="InterPro" id="IPR013747">
    <property type="entry name" value="ACP_syn_III_C"/>
</dbReference>
<dbReference type="InterPro" id="IPR013751">
    <property type="entry name" value="ACP_syn_III_N"/>
</dbReference>
<dbReference type="InterPro" id="IPR004655">
    <property type="entry name" value="FabH"/>
</dbReference>
<dbReference type="InterPro" id="IPR016039">
    <property type="entry name" value="Thiolase-like"/>
</dbReference>
<dbReference type="NCBIfam" id="TIGR00747">
    <property type="entry name" value="fabH"/>
    <property type="match status" value="1"/>
</dbReference>
<dbReference type="NCBIfam" id="NF006829">
    <property type="entry name" value="PRK09352.1"/>
    <property type="match status" value="1"/>
</dbReference>
<dbReference type="PANTHER" id="PTHR43091">
    <property type="entry name" value="3-OXOACYL-[ACYL-CARRIER-PROTEIN] SYNTHASE"/>
    <property type="match status" value="1"/>
</dbReference>
<dbReference type="PANTHER" id="PTHR43091:SF1">
    <property type="entry name" value="BETA-KETOACYL-[ACYL-CARRIER-PROTEIN] SYNTHASE III, CHLOROPLASTIC"/>
    <property type="match status" value="1"/>
</dbReference>
<dbReference type="Pfam" id="PF08545">
    <property type="entry name" value="ACP_syn_III"/>
    <property type="match status" value="1"/>
</dbReference>
<dbReference type="Pfam" id="PF08541">
    <property type="entry name" value="ACP_syn_III_C"/>
    <property type="match status" value="1"/>
</dbReference>
<dbReference type="SUPFAM" id="SSF53901">
    <property type="entry name" value="Thiolase-like"/>
    <property type="match status" value="1"/>
</dbReference>
<reference key="1">
    <citation type="journal article" date="2005" name="Nat. Biotechnol.">
        <title>The complete genome sequence of the meat-borne lactic acid bacterium Lactobacillus sakei 23K.</title>
        <authorList>
            <person name="Chaillou S."/>
            <person name="Champomier-Verges M.-C."/>
            <person name="Cornet M."/>
            <person name="Crutz-Le Coq A.-M."/>
            <person name="Dudez A.-M."/>
            <person name="Martin V."/>
            <person name="Beaufils S."/>
            <person name="Darbon-Rongere E."/>
            <person name="Bossy R."/>
            <person name="Loux V."/>
            <person name="Zagorec M."/>
        </authorList>
    </citation>
    <scope>NUCLEOTIDE SEQUENCE [LARGE SCALE GENOMIC DNA]</scope>
    <source>
        <strain>23K</strain>
    </source>
</reference>
<organism>
    <name type="scientific">Latilactobacillus sakei subsp. sakei (strain 23K)</name>
    <name type="common">Lactobacillus sakei subsp. sakei</name>
    <dbReference type="NCBI Taxonomy" id="314315"/>
    <lineage>
        <taxon>Bacteria</taxon>
        <taxon>Bacillati</taxon>
        <taxon>Bacillota</taxon>
        <taxon>Bacilli</taxon>
        <taxon>Lactobacillales</taxon>
        <taxon>Lactobacillaceae</taxon>
        <taxon>Latilactobacillus</taxon>
    </lineage>
</organism>
<sequence>MAFKIIETASALPANIVTNDDLTAIMETSNEWIESRTGILERRISETENTSDLCLRVAQTLLDKSGIAVSQIKAIIVATMTPDYYTPSTAAIVQGRLGADQAFAFDISAACSGFTYALSAARGYVQTPDDYVLVIGGEVISKMLDWSDRSTAVLFGDGAAGVLLQGTTSDQESWVSEKLITIGTESDQLVSGYAPVKRPNFGQVGQTQVGIDFFKMTGKAIYQFSTRRVPKAIEAAVLEAGLTLDQIDHFLVHQANSRLITKMASMLDQPLTKFPMNLQHYGNTSAASIPLLLAEQVETNQIKRGDLCVLCGFGGGLTIGIQIIRY</sequence>
<evidence type="ECO:0000255" key="1">
    <source>
        <dbReference type="HAMAP-Rule" id="MF_01815"/>
    </source>
</evidence>
<feature type="chain" id="PRO_1000056373" description="Beta-ketoacyl-[acyl-carrier-protein] synthase III">
    <location>
        <begin position="1"/>
        <end position="326"/>
    </location>
</feature>
<feature type="region of interest" description="ACP-binding" evidence="1">
    <location>
        <begin position="254"/>
        <end position="258"/>
    </location>
</feature>
<feature type="active site" evidence="1">
    <location>
        <position position="111"/>
    </location>
</feature>
<feature type="active site" evidence="1">
    <location>
        <position position="253"/>
    </location>
</feature>
<feature type="active site" evidence="1">
    <location>
        <position position="283"/>
    </location>
</feature>
<proteinExistence type="inferred from homology"/>
<keyword id="KW-0012">Acyltransferase</keyword>
<keyword id="KW-0963">Cytoplasm</keyword>
<keyword id="KW-0275">Fatty acid biosynthesis</keyword>
<keyword id="KW-0276">Fatty acid metabolism</keyword>
<keyword id="KW-0444">Lipid biosynthesis</keyword>
<keyword id="KW-0443">Lipid metabolism</keyword>
<keyword id="KW-0511">Multifunctional enzyme</keyword>
<keyword id="KW-1185">Reference proteome</keyword>
<keyword id="KW-0808">Transferase</keyword>
<name>FABH_LATSS</name>
<protein>
    <recommendedName>
        <fullName evidence="1">Beta-ketoacyl-[acyl-carrier-protein] synthase III</fullName>
        <shortName evidence="1">Beta-ketoacyl-ACP synthase III</shortName>
        <shortName evidence="1">KAS III</shortName>
        <ecNumber evidence="1">2.3.1.180</ecNumber>
    </recommendedName>
    <alternativeName>
        <fullName evidence="1">3-oxoacyl-[acyl-carrier-protein] synthase 3</fullName>
    </alternativeName>
    <alternativeName>
        <fullName evidence="1">3-oxoacyl-[acyl-carrier-protein] synthase III</fullName>
    </alternativeName>
</protein>
<comment type="function">
    <text evidence="1">Catalyzes the condensation reaction of fatty acid synthesis by the addition to an acyl acceptor of two carbons from malonyl-ACP. Catalyzes the first condensation reaction which initiates fatty acid synthesis and may therefore play a role in governing the total rate of fatty acid production. Possesses both acetoacetyl-ACP synthase and acetyl transacylase activities. Its substrate specificity determines the biosynthesis of branched-chain and/or straight-chain of fatty acids.</text>
</comment>
<comment type="catalytic activity">
    <reaction evidence="1">
        <text>malonyl-[ACP] + acetyl-CoA + H(+) = 3-oxobutanoyl-[ACP] + CO2 + CoA</text>
        <dbReference type="Rhea" id="RHEA:12080"/>
        <dbReference type="Rhea" id="RHEA-COMP:9623"/>
        <dbReference type="Rhea" id="RHEA-COMP:9625"/>
        <dbReference type="ChEBI" id="CHEBI:15378"/>
        <dbReference type="ChEBI" id="CHEBI:16526"/>
        <dbReference type="ChEBI" id="CHEBI:57287"/>
        <dbReference type="ChEBI" id="CHEBI:57288"/>
        <dbReference type="ChEBI" id="CHEBI:78449"/>
        <dbReference type="ChEBI" id="CHEBI:78450"/>
        <dbReference type="EC" id="2.3.1.180"/>
    </reaction>
</comment>
<comment type="pathway">
    <text evidence="1">Lipid metabolism; fatty acid biosynthesis.</text>
</comment>
<comment type="subunit">
    <text evidence="1">Homodimer.</text>
</comment>
<comment type="subcellular location">
    <subcellularLocation>
        <location evidence="1">Cytoplasm</location>
    </subcellularLocation>
</comment>
<comment type="domain">
    <text evidence="1">The last Arg residue of the ACP-binding site is essential for the weak association between ACP/AcpP and FabH.</text>
</comment>
<comment type="similarity">
    <text evidence="1">Belongs to the thiolase-like superfamily. FabH family.</text>
</comment>